<dbReference type="EMBL" id="U73857">
    <property type="protein sequence ID" value="AAB18012.1"/>
    <property type="molecule type" value="Genomic_DNA"/>
</dbReference>
<dbReference type="EMBL" id="U00096">
    <property type="protein sequence ID" value="AAC73386.1"/>
    <property type="molecule type" value="Genomic_DNA"/>
</dbReference>
<dbReference type="EMBL" id="AP009048">
    <property type="protein sequence ID" value="BAE76067.1"/>
    <property type="molecule type" value="Genomic_DNA"/>
</dbReference>
<dbReference type="PIR" id="C64754">
    <property type="entry name" value="C64754"/>
</dbReference>
<dbReference type="RefSeq" id="NP_414817.1">
    <property type="nucleotide sequence ID" value="NC_000913.3"/>
</dbReference>
<dbReference type="RefSeq" id="WP_000121359.1">
    <property type="nucleotide sequence ID" value="NZ_SSZK01000048.1"/>
</dbReference>
<dbReference type="SMR" id="P77183"/>
<dbReference type="BioGRID" id="4261499">
    <property type="interactions" value="16"/>
</dbReference>
<dbReference type="FunCoup" id="P77183">
    <property type="interactions" value="111"/>
</dbReference>
<dbReference type="IntAct" id="P77183">
    <property type="interactions" value="4"/>
</dbReference>
<dbReference type="STRING" id="511145.b0283"/>
<dbReference type="PaxDb" id="511145-b0283"/>
<dbReference type="EnsemblBacteria" id="AAC73386">
    <property type="protein sequence ID" value="AAC73386"/>
    <property type="gene ID" value="b0283"/>
</dbReference>
<dbReference type="GeneID" id="945010"/>
<dbReference type="KEGG" id="ecj:JW0277"/>
<dbReference type="KEGG" id="eco:b0283"/>
<dbReference type="KEGG" id="ecoc:C3026_01380"/>
<dbReference type="KEGG" id="ecoc:C3026_24015"/>
<dbReference type="PATRIC" id="fig|1411691.4.peg.1995"/>
<dbReference type="EchoBASE" id="EB3326"/>
<dbReference type="eggNOG" id="COG1975">
    <property type="taxonomic scope" value="Bacteria"/>
</dbReference>
<dbReference type="HOGENOM" id="CLU_041115_2_1_6"/>
<dbReference type="InParanoid" id="P77183"/>
<dbReference type="OMA" id="EDDLSWG"/>
<dbReference type="OrthoDB" id="9815497at2"/>
<dbReference type="PhylomeDB" id="P77183"/>
<dbReference type="BioCyc" id="EcoCyc:G6154-MONOMER"/>
<dbReference type="BioCyc" id="MetaCyc:G6154-MONOMER"/>
<dbReference type="SABIO-RK" id="P77183"/>
<dbReference type="PRO" id="PR:P77183"/>
<dbReference type="Proteomes" id="UP000000625">
    <property type="component" value="Chromosome"/>
</dbReference>
<dbReference type="GO" id="GO:0043546">
    <property type="term" value="F:molybdopterin cofactor binding"/>
    <property type="evidence" value="ECO:0000314"/>
    <property type="project" value="EcoCyc"/>
</dbReference>
<dbReference type="GO" id="GO:0042803">
    <property type="term" value="F:protein homodimerization activity"/>
    <property type="evidence" value="ECO:0000314"/>
    <property type="project" value="EcoCyc"/>
</dbReference>
<dbReference type="FunFam" id="3.40.50.720:FF:000566">
    <property type="entry name" value="Putative xanthine dehydrogenase accessory factor subfamily"/>
    <property type="match status" value="1"/>
</dbReference>
<dbReference type="Gene3D" id="3.40.50.720">
    <property type="entry name" value="NAD(P)-binding Rossmann-like Domain"/>
    <property type="match status" value="1"/>
</dbReference>
<dbReference type="InterPro" id="IPR052698">
    <property type="entry name" value="MoCofactor_Util/Proc"/>
</dbReference>
<dbReference type="InterPro" id="IPR003777">
    <property type="entry name" value="XdhC_CoxI"/>
</dbReference>
<dbReference type="InterPro" id="IPR027051">
    <property type="entry name" value="XdhC_Rossmann_dom"/>
</dbReference>
<dbReference type="PANTHER" id="PTHR30388">
    <property type="entry name" value="ALDEHYDE OXIDOREDUCTASE MOLYBDENUM COFACTOR ASSEMBLY PROTEIN"/>
    <property type="match status" value="1"/>
</dbReference>
<dbReference type="PANTHER" id="PTHR30388:SF4">
    <property type="entry name" value="MOLYBDENUM COFACTOR INSERTION CHAPERONE PAOD"/>
    <property type="match status" value="1"/>
</dbReference>
<dbReference type="Pfam" id="PF13478">
    <property type="entry name" value="XdhC_C"/>
    <property type="match status" value="1"/>
</dbReference>
<dbReference type="Pfam" id="PF02625">
    <property type="entry name" value="XdhC_CoxI"/>
    <property type="match status" value="1"/>
</dbReference>
<reference key="1">
    <citation type="submission" date="1997-01" db="EMBL/GenBank/DDBJ databases">
        <title>Sequence of minutes 4-25 of Escherichia coli.</title>
        <authorList>
            <person name="Chung E."/>
            <person name="Allen E."/>
            <person name="Araujo R."/>
            <person name="Aparicio A.M."/>
            <person name="Davis K."/>
            <person name="Duncan M."/>
            <person name="Federspiel N."/>
            <person name="Hyman R."/>
            <person name="Kalman S."/>
            <person name="Komp C."/>
            <person name="Kurdi O."/>
            <person name="Lew H."/>
            <person name="Lin D."/>
            <person name="Namath A."/>
            <person name="Oefner P."/>
            <person name="Roberts D."/>
            <person name="Schramm S."/>
            <person name="Davis R.W."/>
        </authorList>
    </citation>
    <scope>NUCLEOTIDE SEQUENCE [LARGE SCALE GENOMIC DNA]</scope>
    <source>
        <strain>K12 / MG1655 / ATCC 47076</strain>
    </source>
</reference>
<reference key="2">
    <citation type="journal article" date="1997" name="Science">
        <title>The complete genome sequence of Escherichia coli K-12.</title>
        <authorList>
            <person name="Blattner F.R."/>
            <person name="Plunkett G. III"/>
            <person name="Bloch C.A."/>
            <person name="Perna N.T."/>
            <person name="Burland V."/>
            <person name="Riley M."/>
            <person name="Collado-Vides J."/>
            <person name="Glasner J.D."/>
            <person name="Rode C.K."/>
            <person name="Mayhew G.F."/>
            <person name="Gregor J."/>
            <person name="Davis N.W."/>
            <person name="Kirkpatrick H.A."/>
            <person name="Goeden M.A."/>
            <person name="Rose D.J."/>
            <person name="Mau B."/>
            <person name="Shao Y."/>
        </authorList>
    </citation>
    <scope>NUCLEOTIDE SEQUENCE [LARGE SCALE GENOMIC DNA]</scope>
    <source>
        <strain>K12 / MG1655 / ATCC 47076</strain>
    </source>
</reference>
<reference key="3">
    <citation type="journal article" date="2006" name="Mol. Syst. Biol.">
        <title>Highly accurate genome sequences of Escherichia coli K-12 strains MG1655 and W3110.</title>
        <authorList>
            <person name="Hayashi K."/>
            <person name="Morooka N."/>
            <person name="Yamamoto Y."/>
            <person name="Fujita K."/>
            <person name="Isono K."/>
            <person name="Choi S."/>
            <person name="Ohtsubo E."/>
            <person name="Baba T."/>
            <person name="Wanner B.L."/>
            <person name="Mori H."/>
            <person name="Horiuchi T."/>
        </authorList>
    </citation>
    <scope>NUCLEOTIDE SEQUENCE [LARGE SCALE GENOMIC DNA]</scope>
    <source>
        <strain>K12 / W3110 / ATCC 27325 / DSM 5911</strain>
    </source>
</reference>
<reference key="4">
    <citation type="journal article" date="2009" name="FEBS J.">
        <title>A periplasmic aldehyde oxidoreductase represents the first molybdopterin cytosine dinucleotide cofactor containing molybdo-flavoenzyme from Escherichia coli.</title>
        <authorList>
            <person name="Neumann M."/>
            <person name="Mittelstaedt G."/>
            <person name="Iobbi-Nivol C."/>
            <person name="Saggu M."/>
            <person name="Lendzian F."/>
            <person name="Hildebrandt P."/>
            <person name="Leimkuehler S."/>
        </authorList>
    </citation>
    <scope>FUNCTION</scope>
    <scope>DISRUPTION PHENOTYPE</scope>
</reference>
<reference key="5">
    <citation type="journal article" date="2011" name="J. Biol. Chem.">
        <title>Molybdopterin dinucleotide biosynthesis in Escherichia coli: identification of amino acid residues of molybdopterin dinucleotide transferases that determine specificity for binding of guanine or cytosine nucleotides.</title>
        <authorList>
            <person name="Neumann M."/>
            <person name="Seduk F."/>
            <person name="Iobbi-Nivol C."/>
            <person name="Leimkuhler S."/>
        </authorList>
    </citation>
    <scope>FUNCTION</scope>
    <scope>INTERACTION WITH MOCA</scope>
    <scope>NOMENCLATURE</scope>
</reference>
<reference key="6">
    <citation type="journal article" date="2014" name="PLoS ONE">
        <title>Biochemical, stabilization and crystallization studies on a molecular chaperone (PaoD) involved in the maturation of molybdoenzymes.</title>
        <authorList>
            <person name="Otrelo-Cardoso A.R."/>
            <person name="Schwuchow V."/>
            <person name="Rodrigues D."/>
            <person name="Cabrita E.J."/>
            <person name="Leimkuehler S."/>
            <person name="Romao M.J."/>
            <person name="Santos-Silva T."/>
        </authorList>
    </citation>
    <scope>FUNCTION</scope>
    <scope>SUBUNIT</scope>
    <scope>CRYSTALLIZATION</scope>
</reference>
<name>PAOD_ECOLI</name>
<evidence type="ECO:0000269" key="1">
    <source>
    </source>
</evidence>
<evidence type="ECO:0000269" key="2">
    <source>
    </source>
</evidence>
<evidence type="ECO:0000269" key="3">
    <source>
    </source>
</evidence>
<evidence type="ECO:0000303" key="4">
    <source>
    </source>
</evidence>
<evidence type="ECO:0000305" key="5"/>
<gene>
    <name evidence="4" type="primary">paoD</name>
    <name type="synonym">yagQ</name>
    <name type="ordered locus">b0283</name>
    <name type="ordered locus">JW0277</name>
</gene>
<organism>
    <name type="scientific">Escherichia coli (strain K12)</name>
    <dbReference type="NCBI Taxonomy" id="83333"/>
    <lineage>
        <taxon>Bacteria</taxon>
        <taxon>Pseudomonadati</taxon>
        <taxon>Pseudomonadota</taxon>
        <taxon>Gammaproteobacteria</taxon>
        <taxon>Enterobacterales</taxon>
        <taxon>Enterobacteriaceae</taxon>
        <taxon>Escherichia</taxon>
    </lineage>
</organism>
<sequence>MSYPLFDKDEHWHKPEQAFLTDDHRTILRFAVEALMSGKGAVLVTLVEIRGGAARPLGAQMVVREDGRYCGFVSGGCVEAAAAFEALEMMGSGRDREIRYGEGSPWFDIVLPCGGGITLTLHKLRSAQPLLAVLNRLEQRKPVGLRYDPQAQSLVCLPTQTRTGWNLNGFEVGFRPCVRLMIYGRSLEAQATASLAAATGYDSHIFDLFPASASAQIDTDTAVILLCHDLNRELPVLQAAREAKPFYLGALGSYRTHTLRLQKLHELGWSREETTQIRAPVGIFPKARDAHTLALSVLAEVASVRLHQEEDSCLPPSS</sequence>
<protein>
    <recommendedName>
        <fullName evidence="5">Molybdenum cofactor insertion chaperone PaoD</fullName>
    </recommendedName>
</protein>
<comment type="function">
    <text evidence="1 2 3">Chaperone required for the production of an active PaoABC aldehyde oxidoreductase. Stabilizes the PaoC subunit and is required for the insertion of the molybdenum cofactor into this subunit (PubMed:19368556, PubMed:21081498). Binds molybdenum cofactor. Binds the molybdopterin cytosine dinucleotide (MCD) form of the cofactor after its formation by the molybdenum cofactor cytidylyltransferase MocA (PubMed:24498065).</text>
</comment>
<comment type="subunit">
    <text evidence="2 3">Homodimer in solution (PubMed:24498065). Interacts with MocA (PubMed:21081498).</text>
</comment>
<comment type="disruption phenotype">
    <text evidence="1">Mutation results in complete impairment of cell growth in the presence of cinnamaldehyde.</text>
</comment>
<keyword id="KW-0143">Chaperone</keyword>
<keyword id="KW-1185">Reference proteome</keyword>
<proteinExistence type="evidence at protein level"/>
<feature type="chain" id="PRO_0000168562" description="Molybdenum cofactor insertion chaperone PaoD">
    <location>
        <begin position="1"/>
        <end position="318"/>
    </location>
</feature>
<accession>P77183</accession>
<accession>Q2MCD9</accession>